<reference key="1">
    <citation type="journal article" date="2007" name="PLoS Genet.">
        <title>Patterns and implications of gene gain and loss in the evolution of Prochlorococcus.</title>
        <authorList>
            <person name="Kettler G.C."/>
            <person name="Martiny A.C."/>
            <person name="Huang K."/>
            <person name="Zucker J."/>
            <person name="Coleman M.L."/>
            <person name="Rodrigue S."/>
            <person name="Chen F."/>
            <person name="Lapidus A."/>
            <person name="Ferriera S."/>
            <person name="Johnson J."/>
            <person name="Steglich C."/>
            <person name="Church G.M."/>
            <person name="Richardson P."/>
            <person name="Chisholm S.W."/>
        </authorList>
    </citation>
    <scope>NUCLEOTIDE SEQUENCE [LARGE SCALE GENOMIC DNA]</scope>
    <source>
        <strain>AS9601</strain>
    </source>
</reference>
<comment type="function">
    <text evidence="1">This is one of the proteins that bind and probably mediate the attachment of the 5S RNA into the large ribosomal subunit, where it forms part of the central protuberance.</text>
</comment>
<comment type="subunit">
    <text evidence="1">Part of the 50S ribosomal subunit; part of the 5S rRNA/L5/L18/L25 subcomplex. Contacts the 5S and 23S rRNAs.</text>
</comment>
<comment type="similarity">
    <text evidence="1">Belongs to the universal ribosomal protein uL18 family.</text>
</comment>
<accession>A2BTC2</accession>
<keyword id="KW-0687">Ribonucleoprotein</keyword>
<keyword id="KW-0689">Ribosomal protein</keyword>
<keyword id="KW-0694">RNA-binding</keyword>
<keyword id="KW-0699">rRNA-binding</keyword>
<protein>
    <recommendedName>
        <fullName evidence="1">Large ribosomal subunit protein uL18</fullName>
    </recommendedName>
    <alternativeName>
        <fullName evidence="2">50S ribosomal protein L18</fullName>
    </alternativeName>
</protein>
<gene>
    <name evidence="1" type="primary">rplR</name>
    <name evidence="1" type="synonym">rpl18</name>
    <name type="ordered locus">A9601_17501</name>
</gene>
<organism>
    <name type="scientific">Prochlorococcus marinus (strain AS9601)</name>
    <dbReference type="NCBI Taxonomy" id="146891"/>
    <lineage>
        <taxon>Bacteria</taxon>
        <taxon>Bacillati</taxon>
        <taxon>Cyanobacteriota</taxon>
        <taxon>Cyanophyceae</taxon>
        <taxon>Synechococcales</taxon>
        <taxon>Prochlorococcaceae</taxon>
        <taxon>Prochlorococcus</taxon>
    </lineage>
</organism>
<evidence type="ECO:0000255" key="1">
    <source>
        <dbReference type="HAMAP-Rule" id="MF_01337"/>
    </source>
</evidence>
<evidence type="ECO:0000305" key="2"/>
<sequence>MTKLSRKLQTQKRHRRLRRYLIGDATRPRLSVYRSNNHIYAQVIDDSAQTTICSASTVDKELKEKSEKLPSDCNSSSIVGKLLAKRAIKKGIKQVIFDRGGNLYHGRVKALADAAREAGLEF</sequence>
<feature type="chain" id="PRO_1000053083" description="Large ribosomal subunit protein uL18">
    <location>
        <begin position="1"/>
        <end position="122"/>
    </location>
</feature>
<name>RL18_PROMS</name>
<proteinExistence type="inferred from homology"/>
<dbReference type="EMBL" id="CP000551">
    <property type="protein sequence ID" value="ABM71033.1"/>
    <property type="molecule type" value="Genomic_DNA"/>
</dbReference>
<dbReference type="RefSeq" id="WP_011819157.1">
    <property type="nucleotide sequence ID" value="NC_008816.1"/>
</dbReference>
<dbReference type="SMR" id="A2BTC2"/>
<dbReference type="STRING" id="146891.A9601_17501"/>
<dbReference type="KEGG" id="pmb:A9601_17501"/>
<dbReference type="eggNOG" id="COG0256">
    <property type="taxonomic scope" value="Bacteria"/>
</dbReference>
<dbReference type="HOGENOM" id="CLU_098841_0_1_3"/>
<dbReference type="OrthoDB" id="9810939at2"/>
<dbReference type="Proteomes" id="UP000002590">
    <property type="component" value="Chromosome"/>
</dbReference>
<dbReference type="GO" id="GO:0022625">
    <property type="term" value="C:cytosolic large ribosomal subunit"/>
    <property type="evidence" value="ECO:0007669"/>
    <property type="project" value="TreeGrafter"/>
</dbReference>
<dbReference type="GO" id="GO:0008097">
    <property type="term" value="F:5S rRNA binding"/>
    <property type="evidence" value="ECO:0007669"/>
    <property type="project" value="TreeGrafter"/>
</dbReference>
<dbReference type="GO" id="GO:0003735">
    <property type="term" value="F:structural constituent of ribosome"/>
    <property type="evidence" value="ECO:0007669"/>
    <property type="project" value="InterPro"/>
</dbReference>
<dbReference type="GO" id="GO:0006412">
    <property type="term" value="P:translation"/>
    <property type="evidence" value="ECO:0007669"/>
    <property type="project" value="UniProtKB-UniRule"/>
</dbReference>
<dbReference type="CDD" id="cd00432">
    <property type="entry name" value="Ribosomal_L18_L5e"/>
    <property type="match status" value="1"/>
</dbReference>
<dbReference type="FunFam" id="3.30.420.100:FF:000001">
    <property type="entry name" value="50S ribosomal protein L18"/>
    <property type="match status" value="1"/>
</dbReference>
<dbReference type="Gene3D" id="3.30.420.100">
    <property type="match status" value="1"/>
</dbReference>
<dbReference type="HAMAP" id="MF_01337_B">
    <property type="entry name" value="Ribosomal_uL18_B"/>
    <property type="match status" value="1"/>
</dbReference>
<dbReference type="InterPro" id="IPR004389">
    <property type="entry name" value="Ribosomal_uL18_bac-type"/>
</dbReference>
<dbReference type="InterPro" id="IPR005484">
    <property type="entry name" value="Ribosomal_uL18_bac/euk"/>
</dbReference>
<dbReference type="NCBIfam" id="TIGR00060">
    <property type="entry name" value="L18_bact"/>
    <property type="match status" value="1"/>
</dbReference>
<dbReference type="PANTHER" id="PTHR12899">
    <property type="entry name" value="39S RIBOSOMAL PROTEIN L18, MITOCHONDRIAL"/>
    <property type="match status" value="1"/>
</dbReference>
<dbReference type="PANTHER" id="PTHR12899:SF3">
    <property type="entry name" value="LARGE RIBOSOMAL SUBUNIT PROTEIN UL18M"/>
    <property type="match status" value="1"/>
</dbReference>
<dbReference type="Pfam" id="PF00861">
    <property type="entry name" value="Ribosomal_L18p"/>
    <property type="match status" value="1"/>
</dbReference>
<dbReference type="SUPFAM" id="SSF53137">
    <property type="entry name" value="Translational machinery components"/>
    <property type="match status" value="1"/>
</dbReference>